<proteinExistence type="inferred from homology"/>
<accession>P90726</accession>
<accession>A8XLT7</accession>
<evidence type="ECO:0000250" key="1"/>
<evidence type="ECO:0000250" key="2">
    <source>
        <dbReference type="UniProtKB" id="Q8MXS1"/>
    </source>
</evidence>
<evidence type="ECO:0000250" key="3">
    <source>
        <dbReference type="UniProtKB" id="Q9NP72"/>
    </source>
</evidence>
<evidence type="ECO:0000256" key="4">
    <source>
        <dbReference type="SAM" id="MobiDB-lite"/>
    </source>
</evidence>
<evidence type="ECO:0000305" key="5"/>
<name>RAB18_CAEBR</name>
<sequence length="202" mass="22723">MSDDSSSPLTTLKILIIGESGVGKSSLMLRFVDDVFDPEQAATIGVDFRVTSMTIDGNRVKLAIWDTAGQERFRTLTPSYYRGAQGVICVYDVTSRSSFEKLKHWMTEVDTYCTNDNVIKMMVANKIDMPNRTVTREEGLKFAKRHRTLFIEASAKTKEGVQCTFEELIEKIIQTPDLWDNDRPTFRLGQPTDTSSGNLCGC</sequence>
<protein>
    <recommendedName>
        <fullName>Ras-related protein Rab-18</fullName>
        <ecNumber evidence="3">3.6.5.2</ecNumber>
    </recommendedName>
</protein>
<gene>
    <name type="primary">rab-18</name>
    <name type="ORF">CBG15153</name>
</gene>
<organism>
    <name type="scientific">Caenorhabditis briggsae</name>
    <dbReference type="NCBI Taxonomy" id="6238"/>
    <lineage>
        <taxon>Eukaryota</taxon>
        <taxon>Metazoa</taxon>
        <taxon>Ecdysozoa</taxon>
        <taxon>Nematoda</taxon>
        <taxon>Chromadorea</taxon>
        <taxon>Rhabditida</taxon>
        <taxon>Rhabditina</taxon>
        <taxon>Rhabditomorpha</taxon>
        <taxon>Rhabditoidea</taxon>
        <taxon>Rhabditidae</taxon>
        <taxon>Peloderinae</taxon>
        <taxon>Caenorhabditis</taxon>
    </lineage>
</organism>
<comment type="function">
    <text evidence="2 3">The small GTPases Rab are key regulators of intracellular membrane trafficking, from the formation of transport vesicles to their fusion with membranes. Rabs cycle between an inactive GDP-bound form and an active GTP-bound form that is able to recruit to membranes different sets of downstream effectors directly responsible for vesicle formation, movement, tethering and fusion. Plays a role in apical endocytosis/recycling. May be implicated in transport between the plasma membrane and early endosomes (By similarity).</text>
</comment>
<comment type="catalytic activity">
    <reaction evidence="3">
        <text>GTP + H2O = GDP + phosphate + H(+)</text>
        <dbReference type="Rhea" id="RHEA:19669"/>
        <dbReference type="ChEBI" id="CHEBI:15377"/>
        <dbReference type="ChEBI" id="CHEBI:15378"/>
        <dbReference type="ChEBI" id="CHEBI:37565"/>
        <dbReference type="ChEBI" id="CHEBI:43474"/>
        <dbReference type="ChEBI" id="CHEBI:58189"/>
        <dbReference type="EC" id="3.6.5.2"/>
    </reaction>
    <physiologicalReaction direction="left-to-right" evidence="3">
        <dbReference type="Rhea" id="RHEA:19670"/>
    </physiologicalReaction>
</comment>
<comment type="similarity">
    <text evidence="5">Belongs to the small GTPase superfamily. Rab family.</text>
</comment>
<feature type="chain" id="PRO_0000121199" description="Ras-related protein Rab-18">
    <location>
        <begin position="1"/>
        <end position="202"/>
    </location>
</feature>
<feature type="region of interest" description="Disordered" evidence="4">
    <location>
        <begin position="183"/>
        <end position="202"/>
    </location>
</feature>
<feature type="short sequence motif" description="Effector region" evidence="1">
    <location>
        <begin position="40"/>
        <end position="48"/>
    </location>
</feature>
<feature type="compositionally biased region" description="Polar residues" evidence="4">
    <location>
        <begin position="191"/>
        <end position="202"/>
    </location>
</feature>
<feature type="binding site" evidence="3">
    <location>
        <position position="20"/>
    </location>
    <ligand>
        <name>GTP</name>
        <dbReference type="ChEBI" id="CHEBI:37565"/>
    </ligand>
</feature>
<feature type="binding site" evidence="3">
    <location>
        <position position="23"/>
    </location>
    <ligand>
        <name>GTP</name>
        <dbReference type="ChEBI" id="CHEBI:37565"/>
    </ligand>
</feature>
<feature type="binding site" evidence="3">
    <location>
        <position position="24"/>
    </location>
    <ligand>
        <name>GTP</name>
        <dbReference type="ChEBI" id="CHEBI:37565"/>
    </ligand>
</feature>
<feature type="binding site" evidence="3">
    <location>
        <position position="25"/>
    </location>
    <ligand>
        <name>GTP</name>
        <dbReference type="ChEBI" id="CHEBI:37565"/>
    </ligand>
</feature>
<feature type="binding site" evidence="3">
    <location>
        <position position="26"/>
    </location>
    <ligand>
        <name>GTP</name>
        <dbReference type="ChEBI" id="CHEBI:37565"/>
    </ligand>
</feature>
<feature type="binding site" evidence="3">
    <location>
        <position position="37"/>
    </location>
    <ligand>
        <name>GTP</name>
        <dbReference type="ChEBI" id="CHEBI:37565"/>
    </ligand>
</feature>
<feature type="binding site" evidence="3">
    <location>
        <position position="38"/>
    </location>
    <ligand>
        <name>GTP</name>
        <dbReference type="ChEBI" id="CHEBI:37565"/>
    </ligand>
</feature>
<feature type="binding site" evidence="3">
    <location>
        <position position="43"/>
    </location>
    <ligand>
        <name>GTP</name>
        <dbReference type="ChEBI" id="CHEBI:37565"/>
    </ligand>
</feature>
<feature type="binding site" evidence="3">
    <location>
        <position position="69"/>
    </location>
    <ligand>
        <name>GTP</name>
        <dbReference type="ChEBI" id="CHEBI:37565"/>
    </ligand>
</feature>
<feature type="binding site" evidence="3">
    <location>
        <position position="126"/>
    </location>
    <ligand>
        <name>GTP</name>
        <dbReference type="ChEBI" id="CHEBI:37565"/>
    </ligand>
</feature>
<feature type="binding site" evidence="3">
    <location>
        <position position="128"/>
    </location>
    <ligand>
        <name>GTP</name>
        <dbReference type="ChEBI" id="CHEBI:37565"/>
    </ligand>
</feature>
<feature type="binding site" evidence="3">
    <location>
        <position position="155"/>
    </location>
    <ligand>
        <name>GTP</name>
        <dbReference type="ChEBI" id="CHEBI:37565"/>
    </ligand>
</feature>
<feature type="modified residue" description="Cysteine methyl ester" evidence="1">
    <location>
        <position position="202"/>
    </location>
</feature>
<feature type="lipid moiety-binding region" description="S-geranylgeranyl cysteine" evidence="1">
    <location>
        <position position="200"/>
    </location>
</feature>
<feature type="lipid moiety-binding region" description="S-geranylgeranyl cysteine" evidence="1">
    <location>
        <position position="202"/>
    </location>
</feature>
<reference key="1">
    <citation type="journal article" date="1997" name="Mol. Cell. Biol.">
        <title>Cloning of Caenorhabditis U2AF65: an alternatively spliced RNA containing a novel exon.</title>
        <authorList>
            <person name="Zorio D.A.R."/>
            <person name="Lea K."/>
            <person name="Blumenthal T."/>
        </authorList>
    </citation>
    <scope>NUCLEOTIDE SEQUENCE [GENOMIC DNA]</scope>
</reference>
<reference key="2">
    <citation type="journal article" date="2003" name="PLoS Biol.">
        <title>The genome sequence of Caenorhabditis briggsae: a platform for comparative genomics.</title>
        <authorList>
            <person name="Stein L.D."/>
            <person name="Bao Z."/>
            <person name="Blasiar D."/>
            <person name="Blumenthal T."/>
            <person name="Brent M.R."/>
            <person name="Chen N."/>
            <person name="Chinwalla A."/>
            <person name="Clarke L."/>
            <person name="Clee C."/>
            <person name="Coghlan A."/>
            <person name="Coulson A."/>
            <person name="D'Eustachio P."/>
            <person name="Fitch D.H.A."/>
            <person name="Fulton L.A."/>
            <person name="Fulton R.E."/>
            <person name="Griffiths-Jones S."/>
            <person name="Harris T.W."/>
            <person name="Hillier L.W."/>
            <person name="Kamath R."/>
            <person name="Kuwabara P.E."/>
            <person name="Mardis E.R."/>
            <person name="Marra M.A."/>
            <person name="Miner T.L."/>
            <person name="Minx P."/>
            <person name="Mullikin J.C."/>
            <person name="Plumb R.W."/>
            <person name="Rogers J."/>
            <person name="Schein J.E."/>
            <person name="Sohrmann M."/>
            <person name="Spieth J."/>
            <person name="Stajich J.E."/>
            <person name="Wei C."/>
            <person name="Willey D."/>
            <person name="Wilson R.K."/>
            <person name="Durbin R.M."/>
            <person name="Waterston R.H."/>
        </authorList>
    </citation>
    <scope>NUCLEOTIDE SEQUENCE [LARGE SCALE GENOMIC DNA]</scope>
    <source>
        <strain>AF16</strain>
    </source>
</reference>
<dbReference type="EC" id="3.6.5.2" evidence="3"/>
<dbReference type="EMBL" id="U79145">
    <property type="protein sequence ID" value="AAB38279.1"/>
    <property type="molecule type" value="Genomic_DNA"/>
</dbReference>
<dbReference type="EMBL" id="HE601055">
    <property type="protein sequence ID" value="CAP33591.1"/>
    <property type="molecule type" value="Genomic_DNA"/>
</dbReference>
<dbReference type="SMR" id="P90726"/>
<dbReference type="FunCoup" id="P90726">
    <property type="interactions" value="2824"/>
</dbReference>
<dbReference type="STRING" id="6238.P90726"/>
<dbReference type="EnsemblMetazoa" id="CBG15153.1">
    <property type="protein sequence ID" value="CBG15153.1"/>
    <property type="gene ID" value="WBGene00035481"/>
</dbReference>
<dbReference type="KEGG" id="cbr:CBG_15153"/>
<dbReference type="CTD" id="8584876"/>
<dbReference type="WormBase" id="CBG15153">
    <property type="protein sequence ID" value="CBP18335"/>
    <property type="gene ID" value="WBGene00035481"/>
    <property type="gene designation" value="Cbr-rab-18"/>
</dbReference>
<dbReference type="eggNOG" id="KOG0080">
    <property type="taxonomic scope" value="Eukaryota"/>
</dbReference>
<dbReference type="HOGENOM" id="CLU_041217_10_7_1"/>
<dbReference type="InParanoid" id="P90726"/>
<dbReference type="OMA" id="RVHKMDV"/>
<dbReference type="OrthoDB" id="9989112at2759"/>
<dbReference type="Proteomes" id="UP000008549">
    <property type="component" value="Unassembled WGS sequence"/>
</dbReference>
<dbReference type="GO" id="GO:0012505">
    <property type="term" value="C:endomembrane system"/>
    <property type="evidence" value="ECO:0000318"/>
    <property type="project" value="GO_Central"/>
</dbReference>
<dbReference type="GO" id="GO:0005794">
    <property type="term" value="C:Golgi apparatus"/>
    <property type="evidence" value="ECO:0000318"/>
    <property type="project" value="GO_Central"/>
</dbReference>
<dbReference type="GO" id="GO:0005525">
    <property type="term" value="F:GTP binding"/>
    <property type="evidence" value="ECO:0007669"/>
    <property type="project" value="UniProtKB-KW"/>
</dbReference>
<dbReference type="GO" id="GO:0003924">
    <property type="term" value="F:GTPase activity"/>
    <property type="evidence" value="ECO:0000250"/>
    <property type="project" value="UniProtKB"/>
</dbReference>
<dbReference type="GO" id="GO:0006886">
    <property type="term" value="P:intracellular protein transport"/>
    <property type="evidence" value="ECO:0000318"/>
    <property type="project" value="GO_Central"/>
</dbReference>
<dbReference type="GO" id="GO:0034389">
    <property type="term" value="P:lipid droplet organization"/>
    <property type="evidence" value="ECO:0000318"/>
    <property type="project" value="GO_Central"/>
</dbReference>
<dbReference type="CDD" id="cd01863">
    <property type="entry name" value="Rab18"/>
    <property type="match status" value="1"/>
</dbReference>
<dbReference type="FunFam" id="3.40.50.300:FF:000430">
    <property type="entry name" value="Probable Ras-related protein Rab-18"/>
    <property type="match status" value="1"/>
</dbReference>
<dbReference type="Gene3D" id="3.40.50.300">
    <property type="entry name" value="P-loop containing nucleotide triphosphate hydrolases"/>
    <property type="match status" value="1"/>
</dbReference>
<dbReference type="InterPro" id="IPR027417">
    <property type="entry name" value="P-loop_NTPase"/>
</dbReference>
<dbReference type="InterPro" id="IPR050227">
    <property type="entry name" value="Rab"/>
</dbReference>
<dbReference type="InterPro" id="IPR025662">
    <property type="entry name" value="Sigma_54_int_dom_ATP-bd_1"/>
</dbReference>
<dbReference type="InterPro" id="IPR005225">
    <property type="entry name" value="Small_GTP-bd"/>
</dbReference>
<dbReference type="InterPro" id="IPR001806">
    <property type="entry name" value="Small_GTPase"/>
</dbReference>
<dbReference type="NCBIfam" id="TIGR00231">
    <property type="entry name" value="small_GTP"/>
    <property type="match status" value="1"/>
</dbReference>
<dbReference type="PANTHER" id="PTHR47977">
    <property type="entry name" value="RAS-RELATED PROTEIN RAB"/>
    <property type="match status" value="1"/>
</dbReference>
<dbReference type="Pfam" id="PF00071">
    <property type="entry name" value="Ras"/>
    <property type="match status" value="1"/>
</dbReference>
<dbReference type="PRINTS" id="PR00449">
    <property type="entry name" value="RASTRNSFRMNG"/>
</dbReference>
<dbReference type="SMART" id="SM00177">
    <property type="entry name" value="ARF"/>
    <property type="match status" value="1"/>
</dbReference>
<dbReference type="SMART" id="SM00175">
    <property type="entry name" value="RAB"/>
    <property type="match status" value="1"/>
</dbReference>
<dbReference type="SMART" id="SM00176">
    <property type="entry name" value="RAN"/>
    <property type="match status" value="1"/>
</dbReference>
<dbReference type="SMART" id="SM00173">
    <property type="entry name" value="RAS"/>
    <property type="match status" value="1"/>
</dbReference>
<dbReference type="SMART" id="SM00174">
    <property type="entry name" value="RHO"/>
    <property type="match status" value="1"/>
</dbReference>
<dbReference type="SUPFAM" id="SSF52540">
    <property type="entry name" value="P-loop containing nucleoside triphosphate hydrolases"/>
    <property type="match status" value="1"/>
</dbReference>
<dbReference type="PROSITE" id="PS51419">
    <property type="entry name" value="RAB"/>
    <property type="match status" value="1"/>
</dbReference>
<keyword id="KW-0342">GTP-binding</keyword>
<keyword id="KW-0378">Hydrolase</keyword>
<keyword id="KW-0449">Lipoprotein</keyword>
<keyword id="KW-0488">Methylation</keyword>
<keyword id="KW-0547">Nucleotide-binding</keyword>
<keyword id="KW-0636">Prenylation</keyword>
<keyword id="KW-0653">Protein transport</keyword>
<keyword id="KW-1185">Reference proteome</keyword>
<keyword id="KW-0813">Transport</keyword>